<protein>
    <recommendedName>
        <fullName>Uncharacterized protein MT0908</fullName>
    </recommendedName>
</protein>
<keyword id="KW-1003">Cell membrane</keyword>
<keyword id="KW-0472">Membrane</keyword>
<keyword id="KW-1185">Reference proteome</keyword>
<keyword id="KW-0812">Transmembrane</keyword>
<keyword id="KW-1133">Transmembrane helix</keyword>
<feature type="chain" id="PRO_0000427613" description="Uncharacterized protein MT0908">
    <location>
        <begin position="1"/>
        <end position="340"/>
    </location>
</feature>
<feature type="transmembrane region" description="Helical" evidence="1">
    <location>
        <begin position="162"/>
        <end position="182"/>
    </location>
</feature>
<feature type="transmembrane region" description="Helical" evidence="1">
    <location>
        <begin position="239"/>
        <end position="259"/>
    </location>
</feature>
<organism>
    <name type="scientific">Mycobacterium tuberculosis (strain CDC 1551 / Oshkosh)</name>
    <dbReference type="NCBI Taxonomy" id="83331"/>
    <lineage>
        <taxon>Bacteria</taxon>
        <taxon>Bacillati</taxon>
        <taxon>Actinomycetota</taxon>
        <taxon>Actinomycetes</taxon>
        <taxon>Mycobacteriales</taxon>
        <taxon>Mycobacteriaceae</taxon>
        <taxon>Mycobacterium</taxon>
        <taxon>Mycobacterium tuberculosis complex</taxon>
    </lineage>
</organism>
<name>Y885_MYCTO</name>
<dbReference type="EMBL" id="AE000516">
    <property type="protein sequence ID" value="AAK45150.1"/>
    <property type="molecule type" value="Genomic_DNA"/>
</dbReference>
<dbReference type="PIR" id="B70781">
    <property type="entry name" value="B70781"/>
</dbReference>
<dbReference type="RefSeq" id="WP_003898630.1">
    <property type="nucleotide sequence ID" value="NZ_KK341227.1"/>
</dbReference>
<dbReference type="KEGG" id="mtc:MT0908"/>
<dbReference type="PATRIC" id="fig|83331.31.peg.975"/>
<dbReference type="HOGENOM" id="CLU_051660_0_0_11"/>
<dbReference type="Proteomes" id="UP000001020">
    <property type="component" value="Chromosome"/>
</dbReference>
<dbReference type="GO" id="GO:0005886">
    <property type="term" value="C:plasma membrane"/>
    <property type="evidence" value="ECO:0007669"/>
    <property type="project" value="UniProtKB-SubCell"/>
</dbReference>
<dbReference type="GO" id="GO:0016491">
    <property type="term" value="F:oxidoreductase activity"/>
    <property type="evidence" value="ECO:0007669"/>
    <property type="project" value="InterPro"/>
</dbReference>
<dbReference type="Gene3D" id="1.10.620.20">
    <property type="entry name" value="Ribonucleotide Reductase, subunit A"/>
    <property type="match status" value="1"/>
</dbReference>
<dbReference type="InterPro" id="IPR025859">
    <property type="entry name" value="AurF/CmlI"/>
</dbReference>
<dbReference type="InterPro" id="IPR009078">
    <property type="entry name" value="Ferritin-like_SF"/>
</dbReference>
<dbReference type="InterPro" id="IPR012348">
    <property type="entry name" value="RNR-like"/>
</dbReference>
<dbReference type="Pfam" id="PF11583">
    <property type="entry name" value="AurF"/>
    <property type="match status" value="1"/>
</dbReference>
<dbReference type="SUPFAM" id="SSF47240">
    <property type="entry name" value="Ferritin-like"/>
    <property type="match status" value="1"/>
</dbReference>
<reference key="1">
    <citation type="journal article" date="2002" name="J. Bacteriol.">
        <title>Whole-genome comparison of Mycobacterium tuberculosis clinical and laboratory strains.</title>
        <authorList>
            <person name="Fleischmann R.D."/>
            <person name="Alland D."/>
            <person name="Eisen J.A."/>
            <person name="Carpenter L."/>
            <person name="White O."/>
            <person name="Peterson J.D."/>
            <person name="DeBoy R.T."/>
            <person name="Dodson R.J."/>
            <person name="Gwinn M.L."/>
            <person name="Haft D.H."/>
            <person name="Hickey E.K."/>
            <person name="Kolonay J.F."/>
            <person name="Nelson W.C."/>
            <person name="Umayam L.A."/>
            <person name="Ermolaeva M.D."/>
            <person name="Salzberg S.L."/>
            <person name="Delcher A."/>
            <person name="Utterback T.R."/>
            <person name="Weidman J.F."/>
            <person name="Khouri H.M."/>
            <person name="Gill J."/>
            <person name="Mikula A."/>
            <person name="Bishai W."/>
            <person name="Jacobs W.R. Jr."/>
            <person name="Venter J.C."/>
            <person name="Fraser C.M."/>
        </authorList>
    </citation>
    <scope>NUCLEOTIDE SEQUENCE [LARGE SCALE GENOMIC DNA]</scope>
    <source>
        <strain>CDC 1551 / Oshkosh</strain>
    </source>
</reference>
<accession>P9WKQ4</accession>
<accession>L0T7T2</accession>
<accession>P0A5D5</accession>
<accession>Q10546</accession>
<evidence type="ECO:0000255" key="1"/>
<evidence type="ECO:0000305" key="2"/>
<sequence>MDRTRIVRRWRRNMDVADDAEYVEMLATLSEGSVRRNFNPYTDIDWESPEFAVTDNDPRWILPATDPLGRHPWYQAQSRERQIEIGMWRQANVAKVGLHFESILIRGLMNYTFWMPNGSPEYRYCLHESVEECNHTMMFQEMVNRVGADVPGLPRRLRWVSPLVPLVAGPLPVAFFIGVLAGEEPIDHTQKNVLREGKSLHPIMERVMSIHVAEEARHISFAHEYLRKRLPRLTRMQRFWIALYFPLTMRSLCNAIVVPPKAFWEEFDIPREVKKELFFGSPESRKWLCDMFADARMLAHDTGLMNPIARLVWRLCKIDGKPSRYRSEPQRQHLAAAPAA</sequence>
<comment type="subcellular location">
    <subcellularLocation>
        <location evidence="2">Cell membrane</location>
        <topology evidence="2">Multi-pass membrane protein</topology>
    </subcellularLocation>
</comment>
<proteinExistence type="predicted"/>
<gene>
    <name type="ordered locus">MT0908</name>
</gene>